<evidence type="ECO:0000250" key="1"/>
<evidence type="ECO:0000305" key="2"/>
<gene>
    <name type="primary">PDC2</name>
</gene>
<dbReference type="EC" id="4.1.1.1"/>
<dbReference type="EMBL" id="Z21721">
    <property type="protein sequence ID" value="CAA79818.1"/>
    <property type="molecule type" value="mRNA"/>
</dbReference>
<dbReference type="EMBL" id="D14456">
    <property type="protein sequence ID" value="BAA03353.1"/>
    <property type="molecule type" value="mRNA"/>
</dbReference>
<dbReference type="PIR" id="S35258">
    <property type="entry name" value="S35258"/>
</dbReference>
<dbReference type="SMR" id="Q05326"/>
<dbReference type="STRING" id="4577.Q05326"/>
<dbReference type="PaxDb" id="4577-GRMZM2G038821_P01"/>
<dbReference type="MaizeGDB" id="25417"/>
<dbReference type="eggNOG" id="KOG1184">
    <property type="taxonomic scope" value="Eukaryota"/>
</dbReference>
<dbReference type="InParanoid" id="Q05326"/>
<dbReference type="Proteomes" id="UP000007305">
    <property type="component" value="Unplaced"/>
</dbReference>
<dbReference type="ExpressionAtlas" id="Q05326">
    <property type="expression patterns" value="baseline and differential"/>
</dbReference>
<dbReference type="GO" id="GO:0046872">
    <property type="term" value="F:metal ion binding"/>
    <property type="evidence" value="ECO:0007669"/>
    <property type="project" value="UniProtKB-KW"/>
</dbReference>
<dbReference type="GO" id="GO:0004737">
    <property type="term" value="F:pyruvate decarboxylase activity"/>
    <property type="evidence" value="ECO:0007669"/>
    <property type="project" value="UniProtKB-EC"/>
</dbReference>
<dbReference type="Gene3D" id="3.40.50.970">
    <property type="match status" value="1"/>
</dbReference>
<dbReference type="InterPro" id="IPR012110">
    <property type="entry name" value="PDC/IPDC-like"/>
</dbReference>
<dbReference type="InterPro" id="IPR029061">
    <property type="entry name" value="THDP-binding"/>
</dbReference>
<dbReference type="PANTHER" id="PTHR43452">
    <property type="entry name" value="PYRUVATE DECARBOXYLASE"/>
    <property type="match status" value="1"/>
</dbReference>
<dbReference type="PANTHER" id="PTHR43452:SF6">
    <property type="entry name" value="PYRUVATE DECARBOXYLASE 2"/>
    <property type="match status" value="1"/>
</dbReference>
<dbReference type="SUPFAM" id="SSF52518">
    <property type="entry name" value="Thiamin diphosphate-binding fold (THDP-binding)"/>
    <property type="match status" value="1"/>
</dbReference>
<name>PDC2_MAIZE</name>
<feature type="chain" id="PRO_0000090775" description="Pyruvate decarboxylase 2">
    <location>
        <begin position="1" status="less than"/>
        <end position="106"/>
    </location>
</feature>
<feature type="binding site" evidence="1">
    <location>
        <position position="10"/>
    </location>
    <ligand>
        <name>Mg(2+)</name>
        <dbReference type="ChEBI" id="CHEBI:18420"/>
    </ligand>
</feature>
<feature type="binding site" evidence="1">
    <location>
        <position position="12"/>
    </location>
    <ligand>
        <name>Mg(2+)</name>
        <dbReference type="ChEBI" id="CHEBI:18420"/>
    </ligand>
</feature>
<feature type="non-terminal residue">
    <location>
        <position position="1"/>
    </location>
</feature>
<comment type="catalytic activity">
    <reaction>
        <text>a 2-oxocarboxylate + H(+) = an aldehyde + CO2</text>
        <dbReference type="Rhea" id="RHEA:11628"/>
        <dbReference type="ChEBI" id="CHEBI:15378"/>
        <dbReference type="ChEBI" id="CHEBI:16526"/>
        <dbReference type="ChEBI" id="CHEBI:17478"/>
        <dbReference type="ChEBI" id="CHEBI:35179"/>
        <dbReference type="EC" id="4.1.1.1"/>
    </reaction>
</comment>
<comment type="cofactor">
    <cofactor>
        <name>a metal cation</name>
        <dbReference type="ChEBI" id="CHEBI:25213"/>
    </cofactor>
    <text>Binds 1 metal ion per subunit.</text>
</comment>
<comment type="cofactor">
    <cofactor>
        <name>thiamine diphosphate</name>
        <dbReference type="ChEBI" id="CHEBI:58937"/>
    </cofactor>
    <text>Binds 1 thiamine pyrophosphate per subunit.</text>
</comment>
<comment type="subunit">
    <text evidence="2">Homotetramer.</text>
</comment>
<comment type="developmental stage">
    <text>Appears in endosperm 15 days post-pollination.</text>
</comment>
<comment type="induction">
    <text>By hypoxic stress.</text>
</comment>
<comment type="similarity">
    <text evidence="2">Belongs to the TPP enzyme family.</text>
</comment>
<reference key="1">
    <citation type="journal article" date="1993" name="Mol. Gen. Genet.">
        <title>Multiple pyruvate decarboxylase genes in maize are induced by hypoxia.</title>
        <authorList>
            <person name="Peschke V.M."/>
            <person name="Sachs M.M."/>
        </authorList>
    </citation>
    <scope>NUCLEOTIDE SEQUENCE [MRNA]</scope>
    <source>
        <strain>cv. Berkeley Fast</strain>
        <tissue>Seedling</tissue>
    </source>
</reference>
<sequence>QNSIIFLINNGGYTIEVEIHDGPYNVIKNWNYTGLVEAFHNGEGACYTAKVRTEEELTEALEAALGPKKDCLCFIEVIVHKDDTSKELLEWGSRVSAANSRPPNPQ</sequence>
<keyword id="KW-0210">Decarboxylase</keyword>
<keyword id="KW-0456">Lyase</keyword>
<keyword id="KW-0460">Magnesium</keyword>
<keyword id="KW-0479">Metal-binding</keyword>
<keyword id="KW-1185">Reference proteome</keyword>
<keyword id="KW-0346">Stress response</keyword>
<keyword id="KW-0786">Thiamine pyrophosphate</keyword>
<proteinExistence type="evidence at transcript level"/>
<accession>Q05326</accession>
<protein>
    <recommendedName>
        <fullName>Pyruvate decarboxylase 2</fullName>
        <shortName>PDC</shortName>
        <ecNumber>4.1.1.1</ecNumber>
    </recommendedName>
</protein>
<organism>
    <name type="scientific">Zea mays</name>
    <name type="common">Maize</name>
    <dbReference type="NCBI Taxonomy" id="4577"/>
    <lineage>
        <taxon>Eukaryota</taxon>
        <taxon>Viridiplantae</taxon>
        <taxon>Streptophyta</taxon>
        <taxon>Embryophyta</taxon>
        <taxon>Tracheophyta</taxon>
        <taxon>Spermatophyta</taxon>
        <taxon>Magnoliopsida</taxon>
        <taxon>Liliopsida</taxon>
        <taxon>Poales</taxon>
        <taxon>Poaceae</taxon>
        <taxon>PACMAD clade</taxon>
        <taxon>Panicoideae</taxon>
        <taxon>Andropogonodae</taxon>
        <taxon>Andropogoneae</taxon>
        <taxon>Tripsacinae</taxon>
        <taxon>Zea</taxon>
    </lineage>
</organism>